<sequence>MGVTKKPDLNDPVLRAKLAKGMGHNYYGEPAWPNDLLYIFPVVILGTIACNVGLAVLEPSMIGEPADPFATPLEILPEWYFFPVFQILRTVPNKLLGVLLMVSVPAGLLTVPFLENVNKFQNPFRRPVATTVFLIGTAVALWLGIGATLPIDKSLTLGLF</sequence>
<reference key="1">
    <citation type="journal article" date="2006" name="BMC Genomics">
        <title>The complete chloroplast genome sequence of Gossypium hirsutum: organization and phylogenetic relationships to other angiosperms.</title>
        <authorList>
            <person name="Lee S.-B."/>
            <person name="Kaittanis C."/>
            <person name="Jansen R.K."/>
            <person name="Hostetler J.B."/>
            <person name="Tallon L.J."/>
            <person name="Town C.D."/>
            <person name="Daniell H."/>
        </authorList>
    </citation>
    <scope>NUCLEOTIDE SEQUENCE [LARGE SCALE GENOMIC DNA]</scope>
    <source>
        <strain>cv. Coker 310FR</strain>
    </source>
</reference>
<proteinExistence type="inferred from homology"/>
<evidence type="ECO:0000250" key="1"/>
<evidence type="ECO:0000255" key="2">
    <source>
        <dbReference type="HAMAP-Rule" id="MF_01344"/>
    </source>
</evidence>
<feature type="chain" id="PRO_0000255566" description="Cytochrome b6-f complex subunit 4">
    <location>
        <begin position="1"/>
        <end position="160"/>
    </location>
</feature>
<feature type="transmembrane region" description="Helical" evidence="2">
    <location>
        <begin position="36"/>
        <end position="56"/>
    </location>
</feature>
<feature type="transmembrane region" description="Helical" evidence="2">
    <location>
        <begin position="95"/>
        <end position="115"/>
    </location>
</feature>
<feature type="transmembrane region" description="Helical" evidence="2">
    <location>
        <begin position="131"/>
        <end position="151"/>
    </location>
</feature>
<organism>
    <name type="scientific">Gossypium hirsutum</name>
    <name type="common">Upland cotton</name>
    <name type="synonym">Gossypium mexicanum</name>
    <dbReference type="NCBI Taxonomy" id="3635"/>
    <lineage>
        <taxon>Eukaryota</taxon>
        <taxon>Viridiplantae</taxon>
        <taxon>Streptophyta</taxon>
        <taxon>Embryophyta</taxon>
        <taxon>Tracheophyta</taxon>
        <taxon>Spermatophyta</taxon>
        <taxon>Magnoliopsida</taxon>
        <taxon>eudicotyledons</taxon>
        <taxon>Gunneridae</taxon>
        <taxon>Pentapetalae</taxon>
        <taxon>rosids</taxon>
        <taxon>malvids</taxon>
        <taxon>Malvales</taxon>
        <taxon>Malvaceae</taxon>
        <taxon>Malvoideae</taxon>
        <taxon>Gossypium</taxon>
    </lineage>
</organism>
<dbReference type="EMBL" id="DQ345959">
    <property type="protein sequence ID" value="ABC73658.1"/>
    <property type="molecule type" value="Genomic_DNA"/>
</dbReference>
<dbReference type="RefSeq" id="YP_538967.1">
    <property type="nucleotide sequence ID" value="NC_007944.1"/>
</dbReference>
<dbReference type="SMR" id="Q2L939"/>
<dbReference type="GeneID" id="3989135"/>
<dbReference type="KEGG" id="ghi:3989135"/>
<dbReference type="OrthoDB" id="4218at41938"/>
<dbReference type="Proteomes" id="UP000189702">
    <property type="component" value="Chloroplast Pltd"/>
</dbReference>
<dbReference type="GO" id="GO:0009535">
    <property type="term" value="C:chloroplast thylakoid membrane"/>
    <property type="evidence" value="ECO:0007669"/>
    <property type="project" value="UniProtKB-SubCell"/>
</dbReference>
<dbReference type="GO" id="GO:0045158">
    <property type="term" value="F:electron transporter, transferring electrons within cytochrome b6/f complex of photosystem II activity"/>
    <property type="evidence" value="ECO:0007669"/>
    <property type="project" value="UniProtKB-UniRule"/>
</dbReference>
<dbReference type="GO" id="GO:0045156">
    <property type="term" value="F:electron transporter, transferring electrons within the cyclic electron transport pathway of photosynthesis activity"/>
    <property type="evidence" value="ECO:0007669"/>
    <property type="project" value="InterPro"/>
</dbReference>
<dbReference type="GO" id="GO:0016491">
    <property type="term" value="F:oxidoreductase activity"/>
    <property type="evidence" value="ECO:0007669"/>
    <property type="project" value="InterPro"/>
</dbReference>
<dbReference type="GO" id="GO:0009767">
    <property type="term" value="P:photosynthetic electron transport chain"/>
    <property type="evidence" value="ECO:0007669"/>
    <property type="project" value="InterPro"/>
</dbReference>
<dbReference type="CDD" id="cd00290">
    <property type="entry name" value="cytochrome_b_C"/>
    <property type="match status" value="1"/>
</dbReference>
<dbReference type="FunFam" id="1.10.287.980:FF:000001">
    <property type="entry name" value="Cytochrome b6-f complex subunit 4"/>
    <property type="match status" value="1"/>
</dbReference>
<dbReference type="FunFam" id="1.20.5.510:FF:000002">
    <property type="entry name" value="Cytochrome b6-f complex subunit 4"/>
    <property type="match status" value="1"/>
</dbReference>
<dbReference type="Gene3D" id="1.10.287.980">
    <property type="entry name" value="plastocyanin oxidoreductase"/>
    <property type="match status" value="1"/>
</dbReference>
<dbReference type="Gene3D" id="1.20.5.510">
    <property type="entry name" value="Single helix bin"/>
    <property type="match status" value="1"/>
</dbReference>
<dbReference type="HAMAP" id="MF_01344">
    <property type="entry name" value="Cytb6_f_subIV"/>
    <property type="match status" value="1"/>
</dbReference>
<dbReference type="InterPro" id="IPR005798">
    <property type="entry name" value="Cyt_b/b6_C"/>
</dbReference>
<dbReference type="InterPro" id="IPR036150">
    <property type="entry name" value="Cyt_b/b6_C_sf"/>
</dbReference>
<dbReference type="InterPro" id="IPR005870">
    <property type="entry name" value="Cyt_b6/f_cplx_suIV"/>
</dbReference>
<dbReference type="InterPro" id="IPR048260">
    <property type="entry name" value="Cytochrome_b_C_euk/bac"/>
</dbReference>
<dbReference type="NCBIfam" id="TIGR01156">
    <property type="entry name" value="cytb6_f_IV"/>
    <property type="match status" value="1"/>
</dbReference>
<dbReference type="PANTHER" id="PTHR19271">
    <property type="entry name" value="CYTOCHROME B"/>
    <property type="match status" value="1"/>
</dbReference>
<dbReference type="PANTHER" id="PTHR19271:SF16">
    <property type="entry name" value="CYTOCHROME B"/>
    <property type="match status" value="1"/>
</dbReference>
<dbReference type="Pfam" id="PF00032">
    <property type="entry name" value="Cytochrom_B_C"/>
    <property type="match status" value="1"/>
</dbReference>
<dbReference type="PIRSF" id="PIRSF000033">
    <property type="entry name" value="B6f_17K"/>
    <property type="match status" value="1"/>
</dbReference>
<dbReference type="SUPFAM" id="SSF81648">
    <property type="entry name" value="a domain/subunit of cytochrome bc1 complex (Ubiquinol-cytochrome c reductase)"/>
    <property type="match status" value="1"/>
</dbReference>
<dbReference type="PROSITE" id="PS51003">
    <property type="entry name" value="CYTB_CTER"/>
    <property type="match status" value="1"/>
</dbReference>
<name>PETD_GOSHI</name>
<comment type="function">
    <text evidence="2">Component of the cytochrome b6-f complex, which mediates electron transfer between photosystem II (PSII) and photosystem I (PSI), cyclic electron flow around PSI, and state transitions.</text>
</comment>
<comment type="subunit">
    <text evidence="1">The 4 large subunits of the cytochrome b6-f complex are cytochrome b6, subunit IV (17 kDa polypeptide, petD), cytochrome f and the Rieske protein, while the 4 small subunits are petG, petL, petM and petN. The complex functions as a dimer (By similarity).</text>
</comment>
<comment type="subcellular location">
    <subcellularLocation>
        <location evidence="2">Plastid</location>
        <location evidence="2">Chloroplast thylakoid membrane</location>
        <topology evidence="2">Multi-pass membrane protein</topology>
    </subcellularLocation>
</comment>
<comment type="similarity">
    <text evidence="2">Belongs to the cytochrome b family. PetD subfamily.</text>
</comment>
<geneLocation type="chloroplast"/>
<keyword id="KW-0150">Chloroplast</keyword>
<keyword id="KW-0249">Electron transport</keyword>
<keyword id="KW-0472">Membrane</keyword>
<keyword id="KW-0602">Photosynthesis</keyword>
<keyword id="KW-0934">Plastid</keyword>
<keyword id="KW-1185">Reference proteome</keyword>
<keyword id="KW-0793">Thylakoid</keyword>
<keyword id="KW-0812">Transmembrane</keyword>
<keyword id="KW-1133">Transmembrane helix</keyword>
<keyword id="KW-0813">Transport</keyword>
<gene>
    <name evidence="2" type="primary">petD</name>
</gene>
<accession>Q2L939</accession>
<protein>
    <recommendedName>
        <fullName evidence="2">Cytochrome b6-f complex subunit 4</fullName>
    </recommendedName>
    <alternativeName>
        <fullName evidence="2">17 kDa polypeptide</fullName>
    </alternativeName>
</protein>